<dbReference type="EMBL" id="CP000733">
    <property type="protein sequence ID" value="ABS77755.1"/>
    <property type="molecule type" value="Genomic_DNA"/>
</dbReference>
<dbReference type="RefSeq" id="WP_011997214.1">
    <property type="nucleotide sequence ID" value="NC_009727.1"/>
</dbReference>
<dbReference type="SMR" id="A9KEJ8"/>
<dbReference type="KEGG" id="cbd:CBUD_1682"/>
<dbReference type="HOGENOM" id="CLU_095424_4_1_6"/>
<dbReference type="Proteomes" id="UP000008555">
    <property type="component" value="Chromosome"/>
</dbReference>
<dbReference type="GO" id="GO:0022625">
    <property type="term" value="C:cytosolic large ribosomal subunit"/>
    <property type="evidence" value="ECO:0007669"/>
    <property type="project" value="TreeGrafter"/>
</dbReference>
<dbReference type="GO" id="GO:0003735">
    <property type="term" value="F:structural constituent of ribosome"/>
    <property type="evidence" value="ECO:0007669"/>
    <property type="project" value="InterPro"/>
</dbReference>
<dbReference type="GO" id="GO:0006412">
    <property type="term" value="P:translation"/>
    <property type="evidence" value="ECO:0007669"/>
    <property type="project" value="UniProtKB-UniRule"/>
</dbReference>
<dbReference type="FunFam" id="2.40.50.100:FF:000001">
    <property type="entry name" value="50S ribosomal protein L27"/>
    <property type="match status" value="1"/>
</dbReference>
<dbReference type="Gene3D" id="2.40.50.100">
    <property type="match status" value="1"/>
</dbReference>
<dbReference type="HAMAP" id="MF_00539">
    <property type="entry name" value="Ribosomal_bL27"/>
    <property type="match status" value="1"/>
</dbReference>
<dbReference type="InterPro" id="IPR001684">
    <property type="entry name" value="Ribosomal_bL27"/>
</dbReference>
<dbReference type="InterPro" id="IPR018261">
    <property type="entry name" value="Ribosomal_bL27_CS"/>
</dbReference>
<dbReference type="NCBIfam" id="TIGR00062">
    <property type="entry name" value="L27"/>
    <property type="match status" value="1"/>
</dbReference>
<dbReference type="PANTHER" id="PTHR15893:SF0">
    <property type="entry name" value="LARGE RIBOSOMAL SUBUNIT PROTEIN BL27M"/>
    <property type="match status" value="1"/>
</dbReference>
<dbReference type="PANTHER" id="PTHR15893">
    <property type="entry name" value="RIBOSOMAL PROTEIN L27"/>
    <property type="match status" value="1"/>
</dbReference>
<dbReference type="Pfam" id="PF01016">
    <property type="entry name" value="Ribosomal_L27"/>
    <property type="match status" value="1"/>
</dbReference>
<dbReference type="PRINTS" id="PR00063">
    <property type="entry name" value="RIBOSOMALL27"/>
</dbReference>
<dbReference type="SUPFAM" id="SSF110324">
    <property type="entry name" value="Ribosomal L27 protein-like"/>
    <property type="match status" value="1"/>
</dbReference>
<dbReference type="PROSITE" id="PS00831">
    <property type="entry name" value="RIBOSOMAL_L27"/>
    <property type="match status" value="1"/>
</dbReference>
<organism>
    <name type="scientific">Coxiella burnetii (strain Dugway 5J108-111)</name>
    <dbReference type="NCBI Taxonomy" id="434922"/>
    <lineage>
        <taxon>Bacteria</taxon>
        <taxon>Pseudomonadati</taxon>
        <taxon>Pseudomonadota</taxon>
        <taxon>Gammaproteobacteria</taxon>
        <taxon>Legionellales</taxon>
        <taxon>Coxiellaceae</taxon>
        <taxon>Coxiella</taxon>
    </lineage>
</organism>
<evidence type="ECO:0000255" key="1">
    <source>
        <dbReference type="HAMAP-Rule" id="MF_00539"/>
    </source>
</evidence>
<evidence type="ECO:0000256" key="2">
    <source>
        <dbReference type="SAM" id="MobiDB-lite"/>
    </source>
</evidence>
<evidence type="ECO:0000305" key="3"/>
<comment type="similarity">
    <text evidence="1">Belongs to the bacterial ribosomal protein bL27 family.</text>
</comment>
<sequence>MAHKKAGGSTRNGRDSNPKMLGVKRFGGERVLAGNIIVRQRGTHYRPGENMGMGRDHTLYALIEGKVKFIRKGPKKRNFVSIEPLEESQP</sequence>
<protein>
    <recommendedName>
        <fullName evidence="1">Large ribosomal subunit protein bL27</fullName>
    </recommendedName>
    <alternativeName>
        <fullName evidence="3">50S ribosomal protein L27</fullName>
    </alternativeName>
</protein>
<feature type="chain" id="PRO_1000081884" description="Large ribosomal subunit protein bL27">
    <location>
        <begin position="1"/>
        <end position="90"/>
    </location>
</feature>
<feature type="region of interest" description="Disordered" evidence="2">
    <location>
        <begin position="1"/>
        <end position="22"/>
    </location>
</feature>
<proteinExistence type="inferred from homology"/>
<accession>A9KEJ8</accession>
<name>RL27_COXBN</name>
<gene>
    <name evidence="1" type="primary">rpmA</name>
    <name type="ordered locus">CBUD_1682</name>
</gene>
<reference key="1">
    <citation type="journal article" date="2009" name="Infect. Immun.">
        <title>Comparative genomics reveal extensive transposon-mediated genomic plasticity and diversity among potential effector proteins within the genus Coxiella.</title>
        <authorList>
            <person name="Beare P.A."/>
            <person name="Unsworth N."/>
            <person name="Andoh M."/>
            <person name="Voth D.E."/>
            <person name="Omsland A."/>
            <person name="Gilk S.D."/>
            <person name="Williams K.P."/>
            <person name="Sobral B.W."/>
            <person name="Kupko J.J. III"/>
            <person name="Porcella S.F."/>
            <person name="Samuel J.E."/>
            <person name="Heinzen R.A."/>
        </authorList>
    </citation>
    <scope>NUCLEOTIDE SEQUENCE [LARGE SCALE GENOMIC DNA]</scope>
    <source>
        <strain>Dugway 5J108-111</strain>
    </source>
</reference>
<keyword id="KW-0687">Ribonucleoprotein</keyword>
<keyword id="KW-0689">Ribosomal protein</keyword>